<proteinExistence type="inferred from homology"/>
<protein>
    <recommendedName>
        <fullName evidence="1">Elongation factor 4</fullName>
        <shortName evidence="1">EF-4</shortName>
        <ecNumber evidence="1">3.6.5.n1</ecNumber>
    </recommendedName>
    <alternativeName>
        <fullName evidence="1">Ribosomal back-translocase LepA</fullName>
    </alternativeName>
</protein>
<name>LEPA_AGRFC</name>
<keyword id="KW-0997">Cell inner membrane</keyword>
<keyword id="KW-1003">Cell membrane</keyword>
<keyword id="KW-0342">GTP-binding</keyword>
<keyword id="KW-0378">Hydrolase</keyword>
<keyword id="KW-0472">Membrane</keyword>
<keyword id="KW-0547">Nucleotide-binding</keyword>
<keyword id="KW-0648">Protein biosynthesis</keyword>
<keyword id="KW-1185">Reference proteome</keyword>
<feature type="chain" id="PRO_0000176221" description="Elongation factor 4">
    <location>
        <begin position="1"/>
        <end position="608"/>
    </location>
</feature>
<feature type="domain" description="tr-type G">
    <location>
        <begin position="11"/>
        <end position="193"/>
    </location>
</feature>
<feature type="binding site" evidence="1">
    <location>
        <begin position="23"/>
        <end position="28"/>
    </location>
    <ligand>
        <name>GTP</name>
        <dbReference type="ChEBI" id="CHEBI:37565"/>
    </ligand>
</feature>
<feature type="binding site" evidence="1">
    <location>
        <begin position="140"/>
        <end position="143"/>
    </location>
    <ligand>
        <name>GTP</name>
        <dbReference type="ChEBI" id="CHEBI:37565"/>
    </ligand>
</feature>
<reference key="1">
    <citation type="journal article" date="2001" name="Science">
        <title>The genome of the natural genetic engineer Agrobacterium tumefaciens C58.</title>
        <authorList>
            <person name="Wood D.W."/>
            <person name="Setubal J.C."/>
            <person name="Kaul R."/>
            <person name="Monks D.E."/>
            <person name="Kitajima J.P."/>
            <person name="Okura V.K."/>
            <person name="Zhou Y."/>
            <person name="Chen L."/>
            <person name="Wood G.E."/>
            <person name="Almeida N.F. Jr."/>
            <person name="Woo L."/>
            <person name="Chen Y."/>
            <person name="Paulsen I.T."/>
            <person name="Eisen J.A."/>
            <person name="Karp P.D."/>
            <person name="Bovee D. Sr."/>
            <person name="Chapman P."/>
            <person name="Clendenning J."/>
            <person name="Deatherage G."/>
            <person name="Gillet W."/>
            <person name="Grant C."/>
            <person name="Kutyavin T."/>
            <person name="Levy R."/>
            <person name="Li M.-J."/>
            <person name="McClelland E."/>
            <person name="Palmieri A."/>
            <person name="Raymond C."/>
            <person name="Rouse G."/>
            <person name="Saenphimmachak C."/>
            <person name="Wu Z."/>
            <person name="Romero P."/>
            <person name="Gordon D."/>
            <person name="Zhang S."/>
            <person name="Yoo H."/>
            <person name="Tao Y."/>
            <person name="Biddle P."/>
            <person name="Jung M."/>
            <person name="Krespan W."/>
            <person name="Perry M."/>
            <person name="Gordon-Kamm B."/>
            <person name="Liao L."/>
            <person name="Kim S."/>
            <person name="Hendrick C."/>
            <person name="Zhao Z.-Y."/>
            <person name="Dolan M."/>
            <person name="Chumley F."/>
            <person name="Tingey S.V."/>
            <person name="Tomb J.-F."/>
            <person name="Gordon M.P."/>
            <person name="Olson M.V."/>
            <person name="Nester E.W."/>
        </authorList>
    </citation>
    <scope>NUCLEOTIDE SEQUENCE [LARGE SCALE GENOMIC DNA]</scope>
    <source>
        <strain>C58 / ATCC 33970</strain>
    </source>
</reference>
<reference key="2">
    <citation type="journal article" date="2001" name="Science">
        <title>Genome sequence of the plant pathogen and biotechnology agent Agrobacterium tumefaciens C58.</title>
        <authorList>
            <person name="Goodner B."/>
            <person name="Hinkle G."/>
            <person name="Gattung S."/>
            <person name="Miller N."/>
            <person name="Blanchard M."/>
            <person name="Qurollo B."/>
            <person name="Goldman B.S."/>
            <person name="Cao Y."/>
            <person name="Askenazi M."/>
            <person name="Halling C."/>
            <person name="Mullin L."/>
            <person name="Houmiel K."/>
            <person name="Gordon J."/>
            <person name="Vaudin M."/>
            <person name="Iartchouk O."/>
            <person name="Epp A."/>
            <person name="Liu F."/>
            <person name="Wollam C."/>
            <person name="Allinger M."/>
            <person name="Doughty D."/>
            <person name="Scott C."/>
            <person name="Lappas C."/>
            <person name="Markelz B."/>
            <person name="Flanagan C."/>
            <person name="Crowell C."/>
            <person name="Gurson J."/>
            <person name="Lomo C."/>
            <person name="Sear C."/>
            <person name="Strub G."/>
            <person name="Cielo C."/>
            <person name="Slater S."/>
        </authorList>
    </citation>
    <scope>NUCLEOTIDE SEQUENCE [LARGE SCALE GENOMIC DNA]</scope>
    <source>
        <strain>C58 / ATCC 33970</strain>
    </source>
</reference>
<organism>
    <name type="scientific">Agrobacterium fabrum (strain C58 / ATCC 33970)</name>
    <name type="common">Agrobacterium tumefaciens (strain C58)</name>
    <dbReference type="NCBI Taxonomy" id="176299"/>
    <lineage>
        <taxon>Bacteria</taxon>
        <taxon>Pseudomonadati</taxon>
        <taxon>Pseudomonadota</taxon>
        <taxon>Alphaproteobacteria</taxon>
        <taxon>Hyphomicrobiales</taxon>
        <taxon>Rhizobiaceae</taxon>
        <taxon>Rhizobium/Agrobacterium group</taxon>
        <taxon>Agrobacterium</taxon>
        <taxon>Agrobacterium tumefaciens complex</taxon>
    </lineage>
</organism>
<evidence type="ECO:0000255" key="1">
    <source>
        <dbReference type="HAMAP-Rule" id="MF_00071"/>
    </source>
</evidence>
<sequence length="608" mass="67123">MSTNSTRTPLDHIRNFSIVAHIDHGKSTLADRLIQSTGGLAERDMSEQVLDSMDIERERGITIKAQTVRLHYKANNGETYVLNLIDTPGHVDFAYEVSRSLSACEGSLLVVDASQGVEAQTLANVYQAIDNNHELVTVLNKIDLPAAEPERIKEQIEEVIGIDASDAVMISAKTGLGIPDVLEAIVNRLPPPKSDVGENGPLKALLVDSWYDTYLGVMVLVRVIDGVLTKGQQIRMMGSGAKYGVERVGVLTPKMVNVDSLGPGEIGFITASIKEVADTRVGDTITDDKRPTAQALPGFKPAQPVVFCGLFPVDAADFEDLRAAVGKLRLNDASFSFEMESSAALGFGFRCGFLGLLHLEIIQERLEREFNLDLVATAPSVVYEMTLTDGTEKELHNPADMPDVVKIKEIREPWIKATILTPDEYLGGILKLCQDRRGLQTELTYVGNRAMITYELPLNEVVFDFYDRLKSISKGYASFDYNIIDYREGDLVKMSILVNGDPVDALSMLVHRSAADRRGRGMCEKLKELIPPHMFQIPIQAAIGGKVIARETVRALRKDVTAKCYGGDATRKRKLLDKQKEGKKRMRQFGKVEIPQEAFIAALKMNDE</sequence>
<accession>Q8UIQ2</accession>
<gene>
    <name evidence="1" type="primary">lepA</name>
    <name type="ordered locus">Atu0241</name>
    <name type="ORF">AGR_C_411</name>
</gene>
<comment type="function">
    <text evidence="1">Required for accurate and efficient protein synthesis under certain stress conditions. May act as a fidelity factor of the translation reaction, by catalyzing a one-codon backward translocation of tRNAs on improperly translocated ribosomes. Back-translocation proceeds from a post-translocation (POST) complex to a pre-translocation (PRE) complex, thus giving elongation factor G a second chance to translocate the tRNAs correctly. Binds to ribosomes in a GTP-dependent manner.</text>
</comment>
<comment type="catalytic activity">
    <reaction evidence="1">
        <text>GTP + H2O = GDP + phosphate + H(+)</text>
        <dbReference type="Rhea" id="RHEA:19669"/>
        <dbReference type="ChEBI" id="CHEBI:15377"/>
        <dbReference type="ChEBI" id="CHEBI:15378"/>
        <dbReference type="ChEBI" id="CHEBI:37565"/>
        <dbReference type="ChEBI" id="CHEBI:43474"/>
        <dbReference type="ChEBI" id="CHEBI:58189"/>
        <dbReference type="EC" id="3.6.5.n1"/>
    </reaction>
</comment>
<comment type="subcellular location">
    <subcellularLocation>
        <location evidence="1">Cell inner membrane</location>
        <topology evidence="1">Peripheral membrane protein</topology>
        <orientation evidence="1">Cytoplasmic side</orientation>
    </subcellularLocation>
</comment>
<comment type="similarity">
    <text evidence="1">Belongs to the TRAFAC class translation factor GTPase superfamily. Classic translation factor GTPase family. LepA subfamily.</text>
</comment>
<dbReference type="EC" id="3.6.5.n1" evidence="1"/>
<dbReference type="EMBL" id="AE007869">
    <property type="protein sequence ID" value="AAK86057.1"/>
    <property type="molecule type" value="Genomic_DNA"/>
</dbReference>
<dbReference type="PIR" id="AI2605">
    <property type="entry name" value="AI2605"/>
</dbReference>
<dbReference type="PIR" id="H97387">
    <property type="entry name" value="H97387"/>
</dbReference>
<dbReference type="RefSeq" id="NP_353272.1">
    <property type="nucleotide sequence ID" value="NC_003062.2"/>
</dbReference>
<dbReference type="SMR" id="Q8UIQ2"/>
<dbReference type="STRING" id="176299.Atu0241"/>
<dbReference type="EnsemblBacteria" id="AAK86057">
    <property type="protein sequence ID" value="AAK86057"/>
    <property type="gene ID" value="Atu0241"/>
</dbReference>
<dbReference type="KEGG" id="atu:Atu0241"/>
<dbReference type="PATRIC" id="fig|176299.10.peg.231"/>
<dbReference type="eggNOG" id="COG0481">
    <property type="taxonomic scope" value="Bacteria"/>
</dbReference>
<dbReference type="HOGENOM" id="CLU_009995_3_3_5"/>
<dbReference type="OrthoDB" id="9802948at2"/>
<dbReference type="PhylomeDB" id="Q8UIQ2"/>
<dbReference type="BioCyc" id="AGRO:ATU0241-MONOMER"/>
<dbReference type="Proteomes" id="UP000000813">
    <property type="component" value="Chromosome circular"/>
</dbReference>
<dbReference type="GO" id="GO:0005886">
    <property type="term" value="C:plasma membrane"/>
    <property type="evidence" value="ECO:0007669"/>
    <property type="project" value="UniProtKB-SubCell"/>
</dbReference>
<dbReference type="GO" id="GO:0005525">
    <property type="term" value="F:GTP binding"/>
    <property type="evidence" value="ECO:0007669"/>
    <property type="project" value="UniProtKB-UniRule"/>
</dbReference>
<dbReference type="GO" id="GO:0003924">
    <property type="term" value="F:GTPase activity"/>
    <property type="evidence" value="ECO:0007669"/>
    <property type="project" value="UniProtKB-UniRule"/>
</dbReference>
<dbReference type="GO" id="GO:0097216">
    <property type="term" value="F:guanosine tetraphosphate binding"/>
    <property type="evidence" value="ECO:0007669"/>
    <property type="project" value="UniProtKB-ARBA"/>
</dbReference>
<dbReference type="GO" id="GO:0043022">
    <property type="term" value="F:ribosome binding"/>
    <property type="evidence" value="ECO:0007669"/>
    <property type="project" value="UniProtKB-UniRule"/>
</dbReference>
<dbReference type="GO" id="GO:0003746">
    <property type="term" value="F:translation elongation factor activity"/>
    <property type="evidence" value="ECO:0007669"/>
    <property type="project" value="UniProtKB-UniRule"/>
</dbReference>
<dbReference type="GO" id="GO:0045727">
    <property type="term" value="P:positive regulation of translation"/>
    <property type="evidence" value="ECO:0007669"/>
    <property type="project" value="UniProtKB-UniRule"/>
</dbReference>
<dbReference type="CDD" id="cd03699">
    <property type="entry name" value="EF4_II"/>
    <property type="match status" value="1"/>
</dbReference>
<dbReference type="CDD" id="cd16260">
    <property type="entry name" value="EF4_III"/>
    <property type="match status" value="1"/>
</dbReference>
<dbReference type="CDD" id="cd01890">
    <property type="entry name" value="LepA"/>
    <property type="match status" value="1"/>
</dbReference>
<dbReference type="CDD" id="cd03709">
    <property type="entry name" value="lepA_C"/>
    <property type="match status" value="1"/>
</dbReference>
<dbReference type="FunFam" id="3.40.50.300:FF:000078">
    <property type="entry name" value="Elongation factor 4"/>
    <property type="match status" value="1"/>
</dbReference>
<dbReference type="FunFam" id="2.40.30.10:FF:000015">
    <property type="entry name" value="Translation factor GUF1, mitochondrial"/>
    <property type="match status" value="1"/>
</dbReference>
<dbReference type="FunFam" id="3.30.70.240:FF:000007">
    <property type="entry name" value="Translation factor GUF1, mitochondrial"/>
    <property type="match status" value="1"/>
</dbReference>
<dbReference type="FunFam" id="3.30.70.2570:FF:000001">
    <property type="entry name" value="Translation factor GUF1, mitochondrial"/>
    <property type="match status" value="1"/>
</dbReference>
<dbReference type="FunFam" id="3.30.70.870:FF:000004">
    <property type="entry name" value="Translation factor GUF1, mitochondrial"/>
    <property type="match status" value="1"/>
</dbReference>
<dbReference type="Gene3D" id="3.30.70.240">
    <property type="match status" value="1"/>
</dbReference>
<dbReference type="Gene3D" id="3.30.70.2570">
    <property type="entry name" value="Elongation factor 4, C-terminal domain"/>
    <property type="match status" value="1"/>
</dbReference>
<dbReference type="Gene3D" id="3.30.70.870">
    <property type="entry name" value="Elongation Factor G (Translational Gtpase), domain 3"/>
    <property type="match status" value="1"/>
</dbReference>
<dbReference type="Gene3D" id="3.40.50.300">
    <property type="entry name" value="P-loop containing nucleotide triphosphate hydrolases"/>
    <property type="match status" value="1"/>
</dbReference>
<dbReference type="Gene3D" id="2.40.30.10">
    <property type="entry name" value="Translation factors"/>
    <property type="match status" value="1"/>
</dbReference>
<dbReference type="HAMAP" id="MF_00071">
    <property type="entry name" value="LepA"/>
    <property type="match status" value="1"/>
</dbReference>
<dbReference type="InterPro" id="IPR006297">
    <property type="entry name" value="EF-4"/>
</dbReference>
<dbReference type="InterPro" id="IPR035647">
    <property type="entry name" value="EFG_III/V"/>
</dbReference>
<dbReference type="InterPro" id="IPR000640">
    <property type="entry name" value="EFG_V-like"/>
</dbReference>
<dbReference type="InterPro" id="IPR004161">
    <property type="entry name" value="EFTu-like_2"/>
</dbReference>
<dbReference type="InterPro" id="IPR031157">
    <property type="entry name" value="G_TR_CS"/>
</dbReference>
<dbReference type="InterPro" id="IPR038363">
    <property type="entry name" value="LepA_C_sf"/>
</dbReference>
<dbReference type="InterPro" id="IPR013842">
    <property type="entry name" value="LepA_CTD"/>
</dbReference>
<dbReference type="InterPro" id="IPR035654">
    <property type="entry name" value="LepA_IV"/>
</dbReference>
<dbReference type="InterPro" id="IPR027417">
    <property type="entry name" value="P-loop_NTPase"/>
</dbReference>
<dbReference type="InterPro" id="IPR005225">
    <property type="entry name" value="Small_GTP-bd"/>
</dbReference>
<dbReference type="InterPro" id="IPR000795">
    <property type="entry name" value="T_Tr_GTP-bd_dom"/>
</dbReference>
<dbReference type="NCBIfam" id="TIGR01393">
    <property type="entry name" value="lepA"/>
    <property type="match status" value="1"/>
</dbReference>
<dbReference type="NCBIfam" id="TIGR00231">
    <property type="entry name" value="small_GTP"/>
    <property type="match status" value="1"/>
</dbReference>
<dbReference type="PANTHER" id="PTHR43512:SF4">
    <property type="entry name" value="TRANSLATION FACTOR GUF1 HOMOLOG, CHLOROPLASTIC"/>
    <property type="match status" value="1"/>
</dbReference>
<dbReference type="PANTHER" id="PTHR43512">
    <property type="entry name" value="TRANSLATION FACTOR GUF1-RELATED"/>
    <property type="match status" value="1"/>
</dbReference>
<dbReference type="Pfam" id="PF00679">
    <property type="entry name" value="EFG_C"/>
    <property type="match status" value="1"/>
</dbReference>
<dbReference type="Pfam" id="PF00009">
    <property type="entry name" value="GTP_EFTU"/>
    <property type="match status" value="1"/>
</dbReference>
<dbReference type="Pfam" id="PF03144">
    <property type="entry name" value="GTP_EFTU_D2"/>
    <property type="match status" value="1"/>
</dbReference>
<dbReference type="Pfam" id="PF06421">
    <property type="entry name" value="LepA_C"/>
    <property type="match status" value="1"/>
</dbReference>
<dbReference type="PRINTS" id="PR00315">
    <property type="entry name" value="ELONGATNFCT"/>
</dbReference>
<dbReference type="SUPFAM" id="SSF54980">
    <property type="entry name" value="EF-G C-terminal domain-like"/>
    <property type="match status" value="2"/>
</dbReference>
<dbReference type="SUPFAM" id="SSF52540">
    <property type="entry name" value="P-loop containing nucleoside triphosphate hydrolases"/>
    <property type="match status" value="1"/>
</dbReference>
<dbReference type="PROSITE" id="PS00301">
    <property type="entry name" value="G_TR_1"/>
    <property type="match status" value="1"/>
</dbReference>
<dbReference type="PROSITE" id="PS51722">
    <property type="entry name" value="G_TR_2"/>
    <property type="match status" value="1"/>
</dbReference>